<feature type="chain" id="PRO_0000077948" description="Uncharacterized protein HI_0704">
    <location>
        <begin position="1"/>
        <end position="61"/>
    </location>
</feature>
<keyword id="KW-1185">Reference proteome</keyword>
<protein>
    <recommendedName>
        <fullName>Uncharacterized protein HI_0704</fullName>
    </recommendedName>
</protein>
<reference key="1">
    <citation type="journal article" date="1995" name="Science">
        <title>Whole-genome random sequencing and assembly of Haemophilus influenzae Rd.</title>
        <authorList>
            <person name="Fleischmann R.D."/>
            <person name="Adams M.D."/>
            <person name="White O."/>
            <person name="Clayton R.A."/>
            <person name="Kirkness E.F."/>
            <person name="Kerlavage A.R."/>
            <person name="Bult C.J."/>
            <person name="Tomb J.-F."/>
            <person name="Dougherty B.A."/>
            <person name="Merrick J.M."/>
            <person name="McKenney K."/>
            <person name="Sutton G.G."/>
            <person name="FitzHugh W."/>
            <person name="Fields C.A."/>
            <person name="Gocayne J.D."/>
            <person name="Scott J.D."/>
            <person name="Shirley R."/>
            <person name="Liu L.-I."/>
            <person name="Glodek A."/>
            <person name="Kelley J.M."/>
            <person name="Weidman J.F."/>
            <person name="Phillips C.A."/>
            <person name="Spriggs T."/>
            <person name="Hedblom E."/>
            <person name="Cotton M.D."/>
            <person name="Utterback T.R."/>
            <person name="Hanna M.C."/>
            <person name="Nguyen D.T."/>
            <person name="Saudek D.M."/>
            <person name="Brandon R.C."/>
            <person name="Fine L.D."/>
            <person name="Fritchman J.L."/>
            <person name="Fuhrmann J.L."/>
            <person name="Geoghagen N.S.M."/>
            <person name="Gnehm C.L."/>
            <person name="McDonald L.A."/>
            <person name="Small K.V."/>
            <person name="Fraser C.M."/>
            <person name="Smith H.O."/>
            <person name="Venter J.C."/>
        </authorList>
    </citation>
    <scope>NUCLEOTIDE SEQUENCE [LARGE SCALE GENOMIC DNA]</scope>
    <source>
        <strain>ATCC 51907 / DSM 11121 / KW20 / Rd</strain>
    </source>
</reference>
<proteinExistence type="predicted"/>
<accession>P44040</accession>
<name>Y704_HAEIN</name>
<gene>
    <name type="ordered locus">HI_0704</name>
</gene>
<organism>
    <name type="scientific">Haemophilus influenzae (strain ATCC 51907 / DSM 11121 / KW20 / Rd)</name>
    <dbReference type="NCBI Taxonomy" id="71421"/>
    <lineage>
        <taxon>Bacteria</taxon>
        <taxon>Pseudomonadati</taxon>
        <taxon>Pseudomonadota</taxon>
        <taxon>Gammaproteobacteria</taxon>
        <taxon>Pasteurellales</taxon>
        <taxon>Pasteurellaceae</taxon>
        <taxon>Haemophilus</taxon>
    </lineage>
</organism>
<sequence>MNKLSLVLVAGFLLVGCASESVKDPDALPNGIMQPVEGTGAVAGGSFMPEIQKNTIPTQMK</sequence>
<dbReference type="EMBL" id="L42023">
    <property type="protein sequence ID" value="AAC22367.1"/>
    <property type="molecule type" value="Genomic_DNA"/>
</dbReference>
<dbReference type="PIR" id="D64012">
    <property type="entry name" value="D64012"/>
</dbReference>
<dbReference type="RefSeq" id="NP_438863.1">
    <property type="nucleotide sequence ID" value="NC_000907.1"/>
</dbReference>
<dbReference type="STRING" id="71421.HI_0704"/>
<dbReference type="EnsemblBacteria" id="AAC22367">
    <property type="protein sequence ID" value="AAC22367"/>
    <property type="gene ID" value="HI_0704"/>
</dbReference>
<dbReference type="KEGG" id="hin:HI_0704"/>
<dbReference type="PATRIC" id="fig|71421.8.peg.735"/>
<dbReference type="HOGENOM" id="CLU_205894_0_0_6"/>
<dbReference type="OrthoDB" id="5685103at2"/>
<dbReference type="BioCyc" id="HINF71421:G1GJ1-738-MONOMER"/>
<dbReference type="Proteomes" id="UP000000579">
    <property type="component" value="Chromosome"/>
</dbReference>
<dbReference type="PROSITE" id="PS51257">
    <property type="entry name" value="PROKAR_LIPOPROTEIN"/>
    <property type="match status" value="1"/>
</dbReference>